<proteinExistence type="inferred from homology"/>
<dbReference type="EC" id="2.7.11.1"/>
<dbReference type="EMBL" id="AP005429">
    <property type="protein sequence ID" value="BAD28650.1"/>
    <property type="molecule type" value="Genomic_DNA"/>
</dbReference>
<dbReference type="EMBL" id="AP008215">
    <property type="protein sequence ID" value="BAF25101.1"/>
    <property type="molecule type" value="Genomic_DNA"/>
</dbReference>
<dbReference type="EMBL" id="AP014965">
    <property type="status" value="NOT_ANNOTATED_CDS"/>
    <property type="molecule type" value="Genomic_DNA"/>
</dbReference>
<dbReference type="RefSeq" id="XP_015610806.1">
    <property type="nucleotide sequence ID" value="XM_015755320.1"/>
</dbReference>
<dbReference type="SMR" id="Q6ERS0"/>
<dbReference type="FunCoup" id="Q6ERS0">
    <property type="interactions" value="166"/>
</dbReference>
<dbReference type="STRING" id="39947.Q6ERS0"/>
<dbReference type="PaxDb" id="39947-Q6ERS0"/>
<dbReference type="KEGG" id="dosa:Os09g0418500"/>
<dbReference type="eggNOG" id="KOG0583">
    <property type="taxonomic scope" value="Eukaryota"/>
</dbReference>
<dbReference type="InParanoid" id="Q6ERS0"/>
<dbReference type="OrthoDB" id="193931at2759"/>
<dbReference type="Proteomes" id="UP000000763">
    <property type="component" value="Chromosome 9"/>
</dbReference>
<dbReference type="Proteomes" id="UP000059680">
    <property type="component" value="Chromosome 9"/>
</dbReference>
<dbReference type="GO" id="GO:0005524">
    <property type="term" value="F:ATP binding"/>
    <property type="evidence" value="ECO:0007669"/>
    <property type="project" value="UniProtKB-KW"/>
</dbReference>
<dbReference type="GO" id="GO:0106310">
    <property type="term" value="F:protein serine kinase activity"/>
    <property type="evidence" value="ECO:0007669"/>
    <property type="project" value="RHEA"/>
</dbReference>
<dbReference type="GO" id="GO:0004674">
    <property type="term" value="F:protein serine/threonine kinase activity"/>
    <property type="evidence" value="ECO:0000318"/>
    <property type="project" value="GO_Central"/>
</dbReference>
<dbReference type="GO" id="GO:0007165">
    <property type="term" value="P:signal transduction"/>
    <property type="evidence" value="ECO:0000318"/>
    <property type="project" value="GO_Central"/>
</dbReference>
<dbReference type="CDD" id="cd12195">
    <property type="entry name" value="CIPK_C"/>
    <property type="match status" value="1"/>
</dbReference>
<dbReference type="FunFam" id="1.10.510.10:FF:000279">
    <property type="entry name" value="Non-specific serine/threonine protein kinase"/>
    <property type="match status" value="1"/>
</dbReference>
<dbReference type="FunFam" id="3.30.200.20:FF:000096">
    <property type="entry name" value="Non-specific serine/threonine protein kinase"/>
    <property type="match status" value="1"/>
</dbReference>
<dbReference type="Gene3D" id="3.30.310.80">
    <property type="entry name" value="Kinase associated domain 1, KA1"/>
    <property type="match status" value="2"/>
</dbReference>
<dbReference type="Gene3D" id="1.10.510.10">
    <property type="entry name" value="Transferase(Phosphotransferase) domain 1"/>
    <property type="match status" value="1"/>
</dbReference>
<dbReference type="InterPro" id="IPR011009">
    <property type="entry name" value="Kinase-like_dom_sf"/>
</dbReference>
<dbReference type="InterPro" id="IPR018451">
    <property type="entry name" value="NAF/FISL_domain"/>
</dbReference>
<dbReference type="InterPro" id="IPR004041">
    <property type="entry name" value="NAF_dom"/>
</dbReference>
<dbReference type="InterPro" id="IPR000719">
    <property type="entry name" value="Prot_kinase_dom"/>
</dbReference>
<dbReference type="InterPro" id="IPR017441">
    <property type="entry name" value="Protein_kinase_ATP_BS"/>
</dbReference>
<dbReference type="InterPro" id="IPR008271">
    <property type="entry name" value="Ser/Thr_kinase_AS"/>
</dbReference>
<dbReference type="PANTHER" id="PTHR43895">
    <property type="entry name" value="CALCIUM/CALMODULIN-DEPENDENT PROTEIN KINASE KINASE-RELATED"/>
    <property type="match status" value="1"/>
</dbReference>
<dbReference type="PANTHER" id="PTHR43895:SF91">
    <property type="entry name" value="CBL-INTERACTING SERINE_THREONINE-PROTEIN KINASE 6"/>
    <property type="match status" value="1"/>
</dbReference>
<dbReference type="Pfam" id="PF03822">
    <property type="entry name" value="NAF"/>
    <property type="match status" value="1"/>
</dbReference>
<dbReference type="Pfam" id="PF00069">
    <property type="entry name" value="Pkinase"/>
    <property type="match status" value="1"/>
</dbReference>
<dbReference type="SMART" id="SM00220">
    <property type="entry name" value="S_TKc"/>
    <property type="match status" value="1"/>
</dbReference>
<dbReference type="SUPFAM" id="SSF56112">
    <property type="entry name" value="Protein kinase-like (PK-like)"/>
    <property type="match status" value="1"/>
</dbReference>
<dbReference type="PROSITE" id="PS50816">
    <property type="entry name" value="NAF"/>
    <property type="match status" value="1"/>
</dbReference>
<dbReference type="PROSITE" id="PS00107">
    <property type="entry name" value="PROTEIN_KINASE_ATP"/>
    <property type="match status" value="1"/>
</dbReference>
<dbReference type="PROSITE" id="PS50011">
    <property type="entry name" value="PROTEIN_KINASE_DOM"/>
    <property type="match status" value="1"/>
</dbReference>
<dbReference type="PROSITE" id="PS00108">
    <property type="entry name" value="PROTEIN_KINASE_ST"/>
    <property type="match status" value="1"/>
</dbReference>
<reference key="1">
    <citation type="journal article" date="2005" name="Nature">
        <title>The map-based sequence of the rice genome.</title>
        <authorList>
            <consortium name="International rice genome sequencing project (IRGSP)"/>
        </authorList>
    </citation>
    <scope>NUCLEOTIDE SEQUENCE [LARGE SCALE GENOMIC DNA]</scope>
    <source>
        <strain>cv. Nipponbare</strain>
    </source>
</reference>
<reference key="2">
    <citation type="journal article" date="2008" name="Nucleic Acids Res.">
        <title>The rice annotation project database (RAP-DB): 2008 update.</title>
        <authorList>
            <consortium name="The rice annotation project (RAP)"/>
        </authorList>
    </citation>
    <scope>GENOME REANNOTATION</scope>
    <source>
        <strain>cv. Nipponbare</strain>
    </source>
</reference>
<reference key="3">
    <citation type="journal article" date="2013" name="Rice">
        <title>Improvement of the Oryza sativa Nipponbare reference genome using next generation sequence and optical map data.</title>
        <authorList>
            <person name="Kawahara Y."/>
            <person name="de la Bastide M."/>
            <person name="Hamilton J.P."/>
            <person name="Kanamori H."/>
            <person name="McCombie W.R."/>
            <person name="Ouyang S."/>
            <person name="Schwartz D.C."/>
            <person name="Tanaka T."/>
            <person name="Wu J."/>
            <person name="Zhou S."/>
            <person name="Childs K.L."/>
            <person name="Davidson R.M."/>
            <person name="Lin H."/>
            <person name="Quesada-Ocampo L."/>
            <person name="Vaillancourt B."/>
            <person name="Sakai H."/>
            <person name="Lee S.S."/>
            <person name="Kim J."/>
            <person name="Numa H."/>
            <person name="Itoh T."/>
            <person name="Buell C.R."/>
            <person name="Matsumoto T."/>
        </authorList>
    </citation>
    <scope>GENOME REANNOTATION</scope>
    <source>
        <strain>cv. Nipponbare</strain>
    </source>
</reference>
<reference key="4">
    <citation type="journal article" date="2004" name="Plant Physiol.">
        <title>Calcium sensors and their interacting protein kinases: genomics of the Arabidopsis and rice CBL-CIPK signaling networks.</title>
        <authorList>
            <person name="Kolukisaoglu U."/>
            <person name="Weinl S."/>
            <person name="Blazevic D."/>
            <person name="Batistic O."/>
            <person name="Kudla J."/>
        </authorList>
    </citation>
    <scope>GENE FAMILY</scope>
    <scope>NOMENCLATURE</scope>
</reference>
<evidence type="ECO:0000250" key="1"/>
<evidence type="ECO:0000255" key="2">
    <source>
        <dbReference type="PROSITE-ProRule" id="PRU00159"/>
    </source>
</evidence>
<evidence type="ECO:0000255" key="3">
    <source>
        <dbReference type="PROSITE-ProRule" id="PRU00256"/>
    </source>
</evidence>
<evidence type="ECO:0000255" key="4">
    <source>
        <dbReference type="PROSITE-ProRule" id="PRU10027"/>
    </source>
</evidence>
<evidence type="ECO:0000305" key="5"/>
<protein>
    <recommendedName>
        <fullName>Putative CBL-interacting protein kinase 27</fullName>
        <ecNumber>2.7.11.1</ecNumber>
    </recommendedName>
    <alternativeName>
        <fullName>OsCIPK27</fullName>
    </alternativeName>
</protein>
<organism>
    <name type="scientific">Oryza sativa subsp. japonica</name>
    <name type="common">Rice</name>
    <dbReference type="NCBI Taxonomy" id="39947"/>
    <lineage>
        <taxon>Eukaryota</taxon>
        <taxon>Viridiplantae</taxon>
        <taxon>Streptophyta</taxon>
        <taxon>Embryophyta</taxon>
        <taxon>Tracheophyta</taxon>
        <taxon>Spermatophyta</taxon>
        <taxon>Magnoliopsida</taxon>
        <taxon>Liliopsida</taxon>
        <taxon>Poales</taxon>
        <taxon>Poaceae</taxon>
        <taxon>BOP clade</taxon>
        <taxon>Oryzoideae</taxon>
        <taxon>Oryzeae</taxon>
        <taxon>Oryzinae</taxon>
        <taxon>Oryza</taxon>
        <taxon>Oryza sativa</taxon>
    </lineage>
</organism>
<gene>
    <name type="primary">CIPK27</name>
    <name type="ordered locus">Os09g0418500</name>
    <name type="ordered locus">LOC_Os09g25100</name>
    <name type="ORF">P0701F11.10</name>
</gene>
<sequence length="404" mass="43786">MEGKGVLEGRYEMGRVLGHGNFGRVHAARDVRTGRAVAMKVVSKDKVERAGMAEQIKREIAVMKMVSHPSVVELHEVMATRTKVYLALELVRGGELFDRIARHGRVGEGVARRYFRQLVSAVDFCHGRGVYHRDLKPENLLLDEAGNLKVADFGLSALACHARPDGLLHTACGTPAYVAPEVLAGNGYDGAKADLWSCGVILYVLLAGALPFQDDNLVCMYRKMRRGDFCCPPWVTTDARKLIKSLLDPNPGTRITVAGLLETPWFRKTAPVPRPIIADPAAAPVDTRGNAGDDKDEPPEVLNAFHLISLSEGFDLSPLFEHDPAASPGRATARAGGTRFATREAASGVVARLEALAMGGARVAPSLLMVDVKKDGGDAMEYRPFFSEELRPALKDIVWSPAAT</sequence>
<comment type="function">
    <text evidence="1">CIPK serine-threonine protein kinases interact with CBL proteins. Binding of a CBL protein to the regulatory NAF domain of CIPK protein lead to the activation of the kinase in a calcium-dependent manner (By similarity).</text>
</comment>
<comment type="catalytic activity">
    <reaction>
        <text>L-seryl-[protein] + ATP = O-phospho-L-seryl-[protein] + ADP + H(+)</text>
        <dbReference type="Rhea" id="RHEA:17989"/>
        <dbReference type="Rhea" id="RHEA-COMP:9863"/>
        <dbReference type="Rhea" id="RHEA-COMP:11604"/>
        <dbReference type="ChEBI" id="CHEBI:15378"/>
        <dbReference type="ChEBI" id="CHEBI:29999"/>
        <dbReference type="ChEBI" id="CHEBI:30616"/>
        <dbReference type="ChEBI" id="CHEBI:83421"/>
        <dbReference type="ChEBI" id="CHEBI:456216"/>
        <dbReference type="EC" id="2.7.11.1"/>
    </reaction>
</comment>
<comment type="catalytic activity">
    <reaction>
        <text>L-threonyl-[protein] + ATP = O-phospho-L-threonyl-[protein] + ADP + H(+)</text>
        <dbReference type="Rhea" id="RHEA:46608"/>
        <dbReference type="Rhea" id="RHEA-COMP:11060"/>
        <dbReference type="Rhea" id="RHEA-COMP:11605"/>
        <dbReference type="ChEBI" id="CHEBI:15378"/>
        <dbReference type="ChEBI" id="CHEBI:30013"/>
        <dbReference type="ChEBI" id="CHEBI:30616"/>
        <dbReference type="ChEBI" id="CHEBI:61977"/>
        <dbReference type="ChEBI" id="CHEBI:456216"/>
        <dbReference type="EC" id="2.7.11.1"/>
    </reaction>
</comment>
<comment type="cofactor">
    <cofactor evidence="1">
        <name>Mn(2+)</name>
        <dbReference type="ChEBI" id="CHEBI:29035"/>
    </cofactor>
</comment>
<comment type="domain">
    <text evidence="1">The activation loop within the kinase domain is the target of phosphorylation/activation by upstream protein kinases. The PPI motif mediates the interaction with the ABI (abscisic acid-insensitive) phosphatases (By similarity).</text>
</comment>
<comment type="similarity">
    <text evidence="5">Belongs to the protein kinase superfamily. CAMK Ser/Thr protein kinase family. SNF1 subfamily.</text>
</comment>
<name>CIPKR_ORYSJ</name>
<accession>Q6ERS0</accession>
<keyword id="KW-0067">ATP-binding</keyword>
<keyword id="KW-0418">Kinase</keyword>
<keyword id="KW-0464">Manganese</keyword>
<keyword id="KW-0547">Nucleotide-binding</keyword>
<keyword id="KW-1185">Reference proteome</keyword>
<keyword id="KW-0723">Serine/threonine-protein kinase</keyword>
<keyword id="KW-0808">Transferase</keyword>
<feature type="chain" id="PRO_0000338385" description="Putative CBL-interacting protein kinase 27">
    <location>
        <begin position="1"/>
        <end position="404"/>
    </location>
</feature>
<feature type="domain" description="Protein kinase" evidence="2">
    <location>
        <begin position="11"/>
        <end position="266"/>
    </location>
</feature>
<feature type="domain" description="NAF" evidence="3">
    <location>
        <begin position="294"/>
        <end position="321"/>
    </location>
</feature>
<feature type="region of interest" description="Activation loop" evidence="1">
    <location>
        <begin position="152"/>
        <end position="181"/>
    </location>
</feature>
<feature type="region of interest" description="PPI" evidence="1">
    <location>
        <begin position="335"/>
        <end position="356"/>
    </location>
</feature>
<feature type="active site" description="Proton acceptor" evidence="2 4">
    <location>
        <position position="134"/>
    </location>
</feature>
<feature type="binding site" evidence="2">
    <location>
        <begin position="17"/>
        <end position="25"/>
    </location>
    <ligand>
        <name>ATP</name>
        <dbReference type="ChEBI" id="CHEBI:30616"/>
    </ligand>
</feature>
<feature type="binding site" evidence="2">
    <location>
        <position position="40"/>
    </location>
    <ligand>
        <name>ATP</name>
        <dbReference type="ChEBI" id="CHEBI:30616"/>
    </ligand>
</feature>